<comment type="function">
    <text evidence="1">Catalyzes the reversible conversion of 2-phosphoglycerate (2-PG) into phosphoenolpyruvate (PEP). It is essential for the degradation of carbohydrates via glycolysis.</text>
</comment>
<comment type="catalytic activity">
    <reaction evidence="1">
        <text>(2R)-2-phosphoglycerate = phosphoenolpyruvate + H2O</text>
        <dbReference type="Rhea" id="RHEA:10164"/>
        <dbReference type="ChEBI" id="CHEBI:15377"/>
        <dbReference type="ChEBI" id="CHEBI:58289"/>
        <dbReference type="ChEBI" id="CHEBI:58702"/>
        <dbReference type="EC" id="4.2.1.11"/>
    </reaction>
</comment>
<comment type="cofactor">
    <cofactor evidence="1">
        <name>Mg(2+)</name>
        <dbReference type="ChEBI" id="CHEBI:18420"/>
    </cofactor>
    <text evidence="1">Binds a second Mg(2+) ion via substrate during catalysis.</text>
</comment>
<comment type="pathway">
    <text evidence="1">Carbohydrate degradation; glycolysis; pyruvate from D-glyceraldehyde 3-phosphate: step 4/5.</text>
</comment>
<comment type="subcellular location">
    <subcellularLocation>
        <location evidence="1">Cytoplasm</location>
    </subcellularLocation>
    <subcellularLocation>
        <location evidence="1">Secreted</location>
    </subcellularLocation>
    <subcellularLocation>
        <location evidence="1">Cell surface</location>
    </subcellularLocation>
    <text evidence="1">Fractions of enolase are present in both the cytoplasm and on the cell surface.</text>
</comment>
<comment type="similarity">
    <text evidence="1">Belongs to the enolase family.</text>
</comment>
<name>ENO_CHLL2</name>
<organism>
    <name type="scientific">Chlorobium limicola (strain DSM 245 / NBRC 103803 / 6330)</name>
    <dbReference type="NCBI Taxonomy" id="290315"/>
    <lineage>
        <taxon>Bacteria</taxon>
        <taxon>Pseudomonadati</taxon>
        <taxon>Chlorobiota</taxon>
        <taxon>Chlorobiia</taxon>
        <taxon>Chlorobiales</taxon>
        <taxon>Chlorobiaceae</taxon>
        <taxon>Chlorobium/Pelodictyon group</taxon>
        <taxon>Chlorobium</taxon>
    </lineage>
</organism>
<sequence length="437" mass="46974">MPIIRKVLARQILDSRGNPTVEVDVYTENSFGRAAVPSGASTGIHEAVELRDGDAGIYLGKGVLKAVDNVNTVINDALKGMLVTEQEEIDEALLALDGTPNKSKLGANALLGVSLACAKAGAEYTGLPLFRYIGGTMANTLPVPMMNVLNGGAHADNTVDFQEFMIMPIGFSSYSDALRCGAEIFHALKSLLKSKGLSTAVGDEGGFAPNLRSNEEAIELVIEAIGKAGYKAGSPTDKGGLGEAQVMIALDPASSEFYDSAKKRYVFKKSSKQELTSLEMAEYWEKWASDYPIISIEDGMAEDDWEGWKILTDKIGSRVQLVGDDLFVTNSKRLAEGIERRVGNSILIKVNQIGTLTETLQAIDLAKRNGYTAVISHRSGETEDSTIAQIAVATNAGQIKTGSMSRSDRMAKYNELLRIEEELCGQAKYPGASAFRV</sequence>
<protein>
    <recommendedName>
        <fullName evidence="1">Enolase</fullName>
        <ecNumber evidence="1">4.2.1.11</ecNumber>
    </recommendedName>
    <alternativeName>
        <fullName evidence="1">2-phospho-D-glycerate hydro-lyase</fullName>
    </alternativeName>
    <alternativeName>
        <fullName evidence="1">2-phosphoglycerate dehydratase</fullName>
    </alternativeName>
</protein>
<gene>
    <name evidence="1" type="primary">eno</name>
    <name type="ordered locus">Clim_0186</name>
</gene>
<reference key="1">
    <citation type="submission" date="2008-05" db="EMBL/GenBank/DDBJ databases">
        <title>Complete sequence of Chlorobium limicola DSM 245.</title>
        <authorList>
            <consortium name="US DOE Joint Genome Institute"/>
            <person name="Lucas S."/>
            <person name="Copeland A."/>
            <person name="Lapidus A."/>
            <person name="Glavina del Rio T."/>
            <person name="Dalin E."/>
            <person name="Tice H."/>
            <person name="Bruce D."/>
            <person name="Goodwin L."/>
            <person name="Pitluck S."/>
            <person name="Schmutz J."/>
            <person name="Larimer F."/>
            <person name="Land M."/>
            <person name="Hauser L."/>
            <person name="Kyrpides N."/>
            <person name="Ovchinnikova G."/>
            <person name="Zhao F."/>
            <person name="Li T."/>
            <person name="Liu Z."/>
            <person name="Overmann J."/>
            <person name="Bryant D.A."/>
            <person name="Richardson P."/>
        </authorList>
    </citation>
    <scope>NUCLEOTIDE SEQUENCE [LARGE SCALE GENOMIC DNA]</scope>
    <source>
        <strain>DSM 245 / NBRC 103803 / 6330</strain>
    </source>
</reference>
<dbReference type="EC" id="4.2.1.11" evidence="1"/>
<dbReference type="EMBL" id="CP001097">
    <property type="protein sequence ID" value="ACD89285.1"/>
    <property type="molecule type" value="Genomic_DNA"/>
</dbReference>
<dbReference type="RefSeq" id="WP_012465166.1">
    <property type="nucleotide sequence ID" value="NC_010803.1"/>
</dbReference>
<dbReference type="SMR" id="B3EEQ2"/>
<dbReference type="STRING" id="290315.Clim_0186"/>
<dbReference type="KEGG" id="cli:Clim_0186"/>
<dbReference type="eggNOG" id="COG0148">
    <property type="taxonomic scope" value="Bacteria"/>
</dbReference>
<dbReference type="HOGENOM" id="CLU_031223_2_1_10"/>
<dbReference type="OrthoDB" id="9804716at2"/>
<dbReference type="UniPathway" id="UPA00109">
    <property type="reaction ID" value="UER00187"/>
</dbReference>
<dbReference type="Proteomes" id="UP000008841">
    <property type="component" value="Chromosome"/>
</dbReference>
<dbReference type="GO" id="GO:0009986">
    <property type="term" value="C:cell surface"/>
    <property type="evidence" value="ECO:0007669"/>
    <property type="project" value="UniProtKB-SubCell"/>
</dbReference>
<dbReference type="GO" id="GO:0005576">
    <property type="term" value="C:extracellular region"/>
    <property type="evidence" value="ECO:0007669"/>
    <property type="project" value="UniProtKB-SubCell"/>
</dbReference>
<dbReference type="GO" id="GO:0000015">
    <property type="term" value="C:phosphopyruvate hydratase complex"/>
    <property type="evidence" value="ECO:0007669"/>
    <property type="project" value="InterPro"/>
</dbReference>
<dbReference type="GO" id="GO:0000287">
    <property type="term" value="F:magnesium ion binding"/>
    <property type="evidence" value="ECO:0007669"/>
    <property type="project" value="UniProtKB-UniRule"/>
</dbReference>
<dbReference type="GO" id="GO:0004634">
    <property type="term" value="F:phosphopyruvate hydratase activity"/>
    <property type="evidence" value="ECO:0007669"/>
    <property type="project" value="UniProtKB-UniRule"/>
</dbReference>
<dbReference type="GO" id="GO:0006096">
    <property type="term" value="P:glycolytic process"/>
    <property type="evidence" value="ECO:0007669"/>
    <property type="project" value="UniProtKB-UniRule"/>
</dbReference>
<dbReference type="CDD" id="cd03313">
    <property type="entry name" value="enolase"/>
    <property type="match status" value="1"/>
</dbReference>
<dbReference type="FunFam" id="3.20.20.120:FF:000001">
    <property type="entry name" value="Enolase"/>
    <property type="match status" value="1"/>
</dbReference>
<dbReference type="FunFam" id="3.30.390.10:FF:000001">
    <property type="entry name" value="Enolase"/>
    <property type="match status" value="1"/>
</dbReference>
<dbReference type="Gene3D" id="3.20.20.120">
    <property type="entry name" value="Enolase-like C-terminal domain"/>
    <property type="match status" value="1"/>
</dbReference>
<dbReference type="Gene3D" id="3.30.390.10">
    <property type="entry name" value="Enolase-like, N-terminal domain"/>
    <property type="match status" value="1"/>
</dbReference>
<dbReference type="HAMAP" id="MF_00318">
    <property type="entry name" value="Enolase"/>
    <property type="match status" value="1"/>
</dbReference>
<dbReference type="InterPro" id="IPR000941">
    <property type="entry name" value="Enolase"/>
</dbReference>
<dbReference type="InterPro" id="IPR036849">
    <property type="entry name" value="Enolase-like_C_sf"/>
</dbReference>
<dbReference type="InterPro" id="IPR029017">
    <property type="entry name" value="Enolase-like_N"/>
</dbReference>
<dbReference type="InterPro" id="IPR020810">
    <property type="entry name" value="Enolase_C"/>
</dbReference>
<dbReference type="InterPro" id="IPR020809">
    <property type="entry name" value="Enolase_CS"/>
</dbReference>
<dbReference type="InterPro" id="IPR020811">
    <property type="entry name" value="Enolase_N"/>
</dbReference>
<dbReference type="NCBIfam" id="TIGR01060">
    <property type="entry name" value="eno"/>
    <property type="match status" value="1"/>
</dbReference>
<dbReference type="PANTHER" id="PTHR11902">
    <property type="entry name" value="ENOLASE"/>
    <property type="match status" value="1"/>
</dbReference>
<dbReference type="PANTHER" id="PTHR11902:SF1">
    <property type="entry name" value="ENOLASE"/>
    <property type="match status" value="1"/>
</dbReference>
<dbReference type="Pfam" id="PF00113">
    <property type="entry name" value="Enolase_C"/>
    <property type="match status" value="1"/>
</dbReference>
<dbReference type="Pfam" id="PF03952">
    <property type="entry name" value="Enolase_N"/>
    <property type="match status" value="1"/>
</dbReference>
<dbReference type="PIRSF" id="PIRSF001400">
    <property type="entry name" value="Enolase"/>
    <property type="match status" value="1"/>
</dbReference>
<dbReference type="PRINTS" id="PR00148">
    <property type="entry name" value="ENOLASE"/>
</dbReference>
<dbReference type="SFLD" id="SFLDS00001">
    <property type="entry name" value="Enolase"/>
    <property type="match status" value="1"/>
</dbReference>
<dbReference type="SFLD" id="SFLDF00002">
    <property type="entry name" value="enolase"/>
    <property type="match status" value="1"/>
</dbReference>
<dbReference type="SMART" id="SM01192">
    <property type="entry name" value="Enolase_C"/>
    <property type="match status" value="1"/>
</dbReference>
<dbReference type="SMART" id="SM01193">
    <property type="entry name" value="Enolase_N"/>
    <property type="match status" value="1"/>
</dbReference>
<dbReference type="SUPFAM" id="SSF51604">
    <property type="entry name" value="Enolase C-terminal domain-like"/>
    <property type="match status" value="1"/>
</dbReference>
<dbReference type="SUPFAM" id="SSF54826">
    <property type="entry name" value="Enolase N-terminal domain-like"/>
    <property type="match status" value="1"/>
</dbReference>
<dbReference type="PROSITE" id="PS00164">
    <property type="entry name" value="ENOLASE"/>
    <property type="match status" value="1"/>
</dbReference>
<evidence type="ECO:0000255" key="1">
    <source>
        <dbReference type="HAMAP-Rule" id="MF_00318"/>
    </source>
</evidence>
<accession>B3EEQ2</accession>
<proteinExistence type="inferred from homology"/>
<keyword id="KW-0963">Cytoplasm</keyword>
<keyword id="KW-0324">Glycolysis</keyword>
<keyword id="KW-0456">Lyase</keyword>
<keyword id="KW-0460">Magnesium</keyword>
<keyword id="KW-0479">Metal-binding</keyword>
<keyword id="KW-0964">Secreted</keyword>
<feature type="chain" id="PRO_1000115843" description="Enolase">
    <location>
        <begin position="1"/>
        <end position="437"/>
    </location>
</feature>
<feature type="active site" description="Proton donor" evidence="1">
    <location>
        <position position="204"/>
    </location>
</feature>
<feature type="active site" description="Proton acceptor" evidence="1">
    <location>
        <position position="349"/>
    </location>
</feature>
<feature type="binding site" evidence="1">
    <location>
        <position position="162"/>
    </location>
    <ligand>
        <name>(2R)-2-phosphoglycerate</name>
        <dbReference type="ChEBI" id="CHEBI:58289"/>
    </ligand>
</feature>
<feature type="binding site" evidence="1">
    <location>
        <position position="251"/>
    </location>
    <ligand>
        <name>Mg(2+)</name>
        <dbReference type="ChEBI" id="CHEBI:18420"/>
    </ligand>
</feature>
<feature type="binding site" evidence="1">
    <location>
        <position position="297"/>
    </location>
    <ligand>
        <name>Mg(2+)</name>
        <dbReference type="ChEBI" id="CHEBI:18420"/>
    </ligand>
</feature>
<feature type="binding site" evidence="1">
    <location>
        <position position="324"/>
    </location>
    <ligand>
        <name>Mg(2+)</name>
        <dbReference type="ChEBI" id="CHEBI:18420"/>
    </ligand>
</feature>
<feature type="binding site" evidence="1">
    <location>
        <position position="349"/>
    </location>
    <ligand>
        <name>(2R)-2-phosphoglycerate</name>
        <dbReference type="ChEBI" id="CHEBI:58289"/>
    </ligand>
</feature>
<feature type="binding site" evidence="1">
    <location>
        <position position="378"/>
    </location>
    <ligand>
        <name>(2R)-2-phosphoglycerate</name>
        <dbReference type="ChEBI" id="CHEBI:58289"/>
    </ligand>
</feature>
<feature type="binding site" evidence="1">
    <location>
        <position position="379"/>
    </location>
    <ligand>
        <name>(2R)-2-phosphoglycerate</name>
        <dbReference type="ChEBI" id="CHEBI:58289"/>
    </ligand>
</feature>
<feature type="binding site" evidence="1">
    <location>
        <position position="400"/>
    </location>
    <ligand>
        <name>(2R)-2-phosphoglycerate</name>
        <dbReference type="ChEBI" id="CHEBI:58289"/>
    </ligand>
</feature>